<accession>P23101</accession>
<feature type="chain" id="PRO_0000167659" description="Toluate 1,2-dioxygenase electron transfer component">
    <location>
        <begin position="1"/>
        <end position="336"/>
    </location>
</feature>
<feature type="domain" description="2Fe-2S ferredoxin-type" evidence="2">
    <location>
        <begin position="3"/>
        <end position="97"/>
    </location>
</feature>
<feature type="domain" description="FAD-binding FR-type" evidence="3">
    <location>
        <begin position="104"/>
        <end position="204"/>
    </location>
</feature>
<feature type="region of interest" description="Ferredoxin-reductase">
    <location>
        <begin position="99"/>
        <end position="336"/>
    </location>
</feature>
<feature type="binding site" evidence="2">
    <location>
        <position position="40"/>
    </location>
    <ligand>
        <name>[2Fe-2S] cluster</name>
        <dbReference type="ChEBI" id="CHEBI:190135"/>
    </ligand>
</feature>
<feature type="binding site" evidence="2">
    <location>
        <position position="45"/>
    </location>
    <ligand>
        <name>[2Fe-2S] cluster</name>
        <dbReference type="ChEBI" id="CHEBI:190135"/>
    </ligand>
</feature>
<feature type="binding site" evidence="2">
    <location>
        <position position="48"/>
    </location>
    <ligand>
        <name>[2Fe-2S] cluster</name>
        <dbReference type="ChEBI" id="CHEBI:190135"/>
    </ligand>
</feature>
<feature type="binding site" evidence="2">
    <location>
        <position position="81"/>
    </location>
    <ligand>
        <name>[2Fe-2S] cluster</name>
        <dbReference type="ChEBI" id="CHEBI:190135"/>
    </ligand>
</feature>
<protein>
    <recommendedName>
        <fullName>Toluate 1,2-dioxygenase electron transfer component</fullName>
    </recommendedName>
    <domain>
        <recommendedName>
            <fullName>Ferredoxin</fullName>
        </recommendedName>
    </domain>
    <domain>
        <recommendedName>
            <fullName>Ferredoxin--NAD(+) reductase</fullName>
            <ecNumber>1.18.1.3</ecNumber>
        </recommendedName>
    </domain>
</protein>
<name>XYLZ_PSEPU</name>
<reference key="1">
    <citation type="journal article" date="1991" name="J. Bacteriol.">
        <title>Potential DNA slippage structures acquired during evolutionary divergence of Acinetobacter calcoaceticus chromosomal benABC and Pseudomonas putida TOL pWW0 plasmid xylXYZ, genes encoding benzoate dioxygenases.</title>
        <authorList>
            <person name="Harayama S."/>
            <person name="Rekik M."/>
            <person name="Bairoch A."/>
            <person name="Neidle E.L."/>
            <person name="Ornston L.N."/>
        </authorList>
    </citation>
    <scope>NUCLEOTIDE SEQUENCE [GENOMIC DNA]</scope>
</reference>
<proteinExistence type="inferred from homology"/>
<gene>
    <name type="primary">xylZ</name>
</gene>
<sequence length="336" mass="36220">MTHKVATDFEDGVTRFIDANTGETVADAAYRQGINLPLDCRDGACGACKCFAESGRYSLGEEYIEDALSEAEAEQGYVLTCQMRAESDCVIRVPAASDVCKTQQAGYQAAISNVRQLSESTIALSIKSASLNQLAFLPGQYVNLQVPGSDQTRAYSFSSLQKDGEVSFLIRKLPGGLMSSFLTSLAKVGDSVSLAGPLGAFYLREIKRPLLLLAGGTGLAPFTAMLEKIAEQGGEHPLHLIYGVTHDHDLVEMDKLEAFAARIPNFSYSACVASPDSAYPQKGYVTQYIEPKQLNGGEVDIYLCGPPPMVEAVSQYIRAQGIQPANFYYEKFAASA</sequence>
<comment type="function">
    <text>Electron transfer component of toluate 1,2-dioxygenase system.</text>
</comment>
<comment type="catalytic activity">
    <reaction>
        <text>2 reduced [2Fe-2S]-[ferredoxin] + NAD(+) + H(+) = 2 oxidized [2Fe-2S]-[ferredoxin] + NADH</text>
        <dbReference type="Rhea" id="RHEA:16521"/>
        <dbReference type="Rhea" id="RHEA-COMP:10000"/>
        <dbReference type="Rhea" id="RHEA-COMP:10001"/>
        <dbReference type="ChEBI" id="CHEBI:15378"/>
        <dbReference type="ChEBI" id="CHEBI:33737"/>
        <dbReference type="ChEBI" id="CHEBI:33738"/>
        <dbReference type="ChEBI" id="CHEBI:57540"/>
        <dbReference type="ChEBI" id="CHEBI:57945"/>
        <dbReference type="EC" id="1.18.1.3"/>
    </reaction>
</comment>
<comment type="cofactor">
    <cofactor evidence="1">
        <name>FAD</name>
        <dbReference type="ChEBI" id="CHEBI:57692"/>
    </cofactor>
</comment>
<comment type="cofactor">
    <cofactor evidence="1">
        <name>[2Fe-2S] cluster</name>
        <dbReference type="ChEBI" id="CHEBI:190135"/>
    </cofactor>
    <text evidence="1">Binds 1 [2Fe-2S] cluster per subunit.</text>
</comment>
<comment type="subunit">
    <text>This dioxygenase system consists of three proteins: the two subunits of the hydroxylase component (XylX and XylY), and an electron transfer component (XylZ).</text>
</comment>
<comment type="similarity">
    <text evidence="4">Belongs to the bacterial ring-hydroxylating dioxygenase ferredoxin reductase family.</text>
</comment>
<evidence type="ECO:0000250" key="1"/>
<evidence type="ECO:0000255" key="2">
    <source>
        <dbReference type="PROSITE-ProRule" id="PRU00465"/>
    </source>
</evidence>
<evidence type="ECO:0000255" key="3">
    <source>
        <dbReference type="PROSITE-ProRule" id="PRU00716"/>
    </source>
</evidence>
<evidence type="ECO:0000305" key="4"/>
<dbReference type="EC" id="1.18.1.3"/>
<dbReference type="EMBL" id="M64747">
    <property type="protein sequence ID" value="AAA26049.1"/>
    <property type="molecule type" value="Genomic_DNA"/>
</dbReference>
<dbReference type="PIR" id="C41659">
    <property type="entry name" value="C41659"/>
</dbReference>
<dbReference type="RefSeq" id="NP_542869.1">
    <property type="nucleotide sequence ID" value="NC_003350.1"/>
</dbReference>
<dbReference type="RefSeq" id="WP_011005912.1">
    <property type="nucleotide sequence ID" value="NC_003350.1"/>
</dbReference>
<dbReference type="SMR" id="P23101"/>
<dbReference type="KEGG" id="ag:AAA26049"/>
<dbReference type="BioCyc" id="MetaCyc:MONOMER-2963"/>
<dbReference type="GO" id="GO:0051537">
    <property type="term" value="F:2 iron, 2 sulfur cluster binding"/>
    <property type="evidence" value="ECO:0007669"/>
    <property type="project" value="UniProtKB-KW"/>
</dbReference>
<dbReference type="GO" id="GO:0008860">
    <property type="term" value="F:ferredoxin-NAD+ reductase activity"/>
    <property type="evidence" value="ECO:0007669"/>
    <property type="project" value="UniProtKB-EC"/>
</dbReference>
<dbReference type="GO" id="GO:0046872">
    <property type="term" value="F:metal ion binding"/>
    <property type="evidence" value="ECO:0007669"/>
    <property type="project" value="UniProtKB-KW"/>
</dbReference>
<dbReference type="GO" id="GO:0009056">
    <property type="term" value="P:catabolic process"/>
    <property type="evidence" value="ECO:0007669"/>
    <property type="project" value="UniProtKB-KW"/>
</dbReference>
<dbReference type="CDD" id="cd06209">
    <property type="entry name" value="BenDO_FAD_NAD"/>
    <property type="match status" value="1"/>
</dbReference>
<dbReference type="CDD" id="cd00207">
    <property type="entry name" value="fer2"/>
    <property type="match status" value="1"/>
</dbReference>
<dbReference type="Gene3D" id="3.10.20.30">
    <property type="match status" value="1"/>
</dbReference>
<dbReference type="Gene3D" id="3.40.50.80">
    <property type="entry name" value="Nucleotide-binding domain of ferredoxin-NADP reductase (FNR) module"/>
    <property type="match status" value="1"/>
</dbReference>
<dbReference type="Gene3D" id="2.40.30.10">
    <property type="entry name" value="Translation factors"/>
    <property type="match status" value="1"/>
</dbReference>
<dbReference type="InterPro" id="IPR036010">
    <property type="entry name" value="2Fe-2S_ferredoxin-like_sf"/>
</dbReference>
<dbReference type="InterPro" id="IPR001041">
    <property type="entry name" value="2Fe-2S_ferredoxin-type"/>
</dbReference>
<dbReference type="InterPro" id="IPR006058">
    <property type="entry name" value="2Fe2S_fd_BS"/>
</dbReference>
<dbReference type="InterPro" id="IPR047683">
    <property type="entry name" value="BenC-like_FAD_NAD-bd"/>
</dbReference>
<dbReference type="InterPro" id="IPR012675">
    <property type="entry name" value="Beta-grasp_dom_sf"/>
</dbReference>
<dbReference type="InterPro" id="IPR008333">
    <property type="entry name" value="Cbr1-like_FAD-bd_dom"/>
</dbReference>
<dbReference type="InterPro" id="IPR017927">
    <property type="entry name" value="FAD-bd_FR_type"/>
</dbReference>
<dbReference type="InterPro" id="IPR001709">
    <property type="entry name" value="Flavoprot_Pyr_Nucl_cyt_Rdtase"/>
</dbReference>
<dbReference type="InterPro" id="IPR039261">
    <property type="entry name" value="FNR_nucleotide-bd"/>
</dbReference>
<dbReference type="InterPro" id="IPR050415">
    <property type="entry name" value="MRET"/>
</dbReference>
<dbReference type="InterPro" id="IPR001433">
    <property type="entry name" value="OxRdtase_FAD/NAD-bd"/>
</dbReference>
<dbReference type="InterPro" id="IPR017938">
    <property type="entry name" value="Riboflavin_synthase-like_b-brl"/>
</dbReference>
<dbReference type="NCBIfam" id="NF040810">
    <property type="entry name" value="BenC"/>
    <property type="match status" value="1"/>
</dbReference>
<dbReference type="PANTHER" id="PTHR47354">
    <property type="entry name" value="NADH OXIDOREDUCTASE HCR"/>
    <property type="match status" value="1"/>
</dbReference>
<dbReference type="PANTHER" id="PTHR47354:SF5">
    <property type="entry name" value="PROTEIN RFBI"/>
    <property type="match status" value="1"/>
</dbReference>
<dbReference type="Pfam" id="PF00970">
    <property type="entry name" value="FAD_binding_6"/>
    <property type="match status" value="1"/>
</dbReference>
<dbReference type="Pfam" id="PF00111">
    <property type="entry name" value="Fer2"/>
    <property type="match status" value="1"/>
</dbReference>
<dbReference type="Pfam" id="PF00175">
    <property type="entry name" value="NAD_binding_1"/>
    <property type="match status" value="1"/>
</dbReference>
<dbReference type="PRINTS" id="PR00371">
    <property type="entry name" value="FPNCR"/>
</dbReference>
<dbReference type="PRINTS" id="PR00410">
    <property type="entry name" value="PHEHYDRXLASE"/>
</dbReference>
<dbReference type="SUPFAM" id="SSF54292">
    <property type="entry name" value="2Fe-2S ferredoxin-like"/>
    <property type="match status" value="1"/>
</dbReference>
<dbReference type="SUPFAM" id="SSF52343">
    <property type="entry name" value="Ferredoxin reductase-like, C-terminal NADP-linked domain"/>
    <property type="match status" value="1"/>
</dbReference>
<dbReference type="SUPFAM" id="SSF63380">
    <property type="entry name" value="Riboflavin synthase domain-like"/>
    <property type="match status" value="1"/>
</dbReference>
<dbReference type="PROSITE" id="PS00197">
    <property type="entry name" value="2FE2S_FER_1"/>
    <property type="match status" value="1"/>
</dbReference>
<dbReference type="PROSITE" id="PS51085">
    <property type="entry name" value="2FE2S_FER_2"/>
    <property type="match status" value="1"/>
</dbReference>
<dbReference type="PROSITE" id="PS51384">
    <property type="entry name" value="FAD_FR"/>
    <property type="match status" value="1"/>
</dbReference>
<keyword id="KW-0001">2Fe-2S</keyword>
<keyword id="KW-0058">Aromatic hydrocarbons catabolism</keyword>
<keyword id="KW-0274">FAD</keyword>
<keyword id="KW-0285">Flavoprotein</keyword>
<keyword id="KW-0408">Iron</keyword>
<keyword id="KW-0411">Iron-sulfur</keyword>
<keyword id="KW-0479">Metal-binding</keyword>
<keyword id="KW-0520">NAD</keyword>
<keyword id="KW-0560">Oxidoreductase</keyword>
<keyword id="KW-0614">Plasmid</keyword>
<organism>
    <name type="scientific">Pseudomonas putida</name>
    <name type="common">Arthrobacter siderocapsulatus</name>
    <dbReference type="NCBI Taxonomy" id="303"/>
    <lineage>
        <taxon>Bacteria</taxon>
        <taxon>Pseudomonadati</taxon>
        <taxon>Pseudomonadota</taxon>
        <taxon>Gammaproteobacteria</taxon>
        <taxon>Pseudomonadales</taxon>
        <taxon>Pseudomonadaceae</taxon>
        <taxon>Pseudomonas</taxon>
    </lineage>
</organism>
<geneLocation type="plasmid">
    <name>TOL pWW0</name>
</geneLocation>